<accession>P36247</accession>
<protein>
    <recommendedName>
        <fullName evidence="1">Large ribosomal subunit protein bL12</fullName>
    </recommendedName>
    <alternativeName>
        <fullName evidence="3">50S ribosomal protein L7/L12</fullName>
    </alternativeName>
</protein>
<reference key="1">
    <citation type="journal article" date="1993" name="Curr. Microbiol.">
        <title>The genome of the non-cultured, bacterial-like organism associated with citrus greening disease contains the nusG-rplKAJL-rpoBC gene cluster and the gene for a bacteriophage type DNA polymerase.</title>
        <authorList>
            <person name="Villechanoux S."/>
            <person name="Garnier M."/>
            <person name="Laigret F."/>
            <person name="Renaudin J."/>
            <person name="Bove J.M."/>
        </authorList>
    </citation>
    <scope>NUCLEOTIDE SEQUENCE [GENOMIC DNA]</scope>
</reference>
<organism>
    <name type="scientific">Liberibacter asiaticus</name>
    <name type="common">Citrus greening disease</name>
    <name type="synonym">Liberobacter asiaticum</name>
    <dbReference type="NCBI Taxonomy" id="34021"/>
    <lineage>
        <taxon>Bacteria</taxon>
        <taxon>Pseudomonadati</taxon>
        <taxon>Pseudomonadota</taxon>
        <taxon>Alphaproteobacteria</taxon>
        <taxon>Hyphomicrobiales</taxon>
        <taxon>Rhizobiaceae</taxon>
        <taxon>Liberibacter</taxon>
    </lineage>
</organism>
<gene>
    <name evidence="1" type="primary">rplL</name>
</gene>
<evidence type="ECO:0000255" key="1">
    <source>
        <dbReference type="HAMAP-Rule" id="MF_00368"/>
    </source>
</evidence>
<evidence type="ECO:0000256" key="2">
    <source>
        <dbReference type="SAM" id="MobiDB-lite"/>
    </source>
</evidence>
<evidence type="ECO:0000305" key="3"/>
<feature type="chain" id="PRO_0000157544" description="Large ribosomal subunit protein bL12">
    <location>
        <begin position="1"/>
        <end position="122"/>
    </location>
</feature>
<feature type="region of interest" description="Disordered" evidence="2">
    <location>
        <begin position="96"/>
        <end position="122"/>
    </location>
</feature>
<feature type="compositionally biased region" description="Basic and acidic residues" evidence="2">
    <location>
        <begin position="104"/>
        <end position="122"/>
    </location>
</feature>
<dbReference type="EMBL" id="M94319">
    <property type="protein sequence ID" value="AAA23108.1"/>
    <property type="molecule type" value="Genomic_DNA"/>
</dbReference>
<dbReference type="SMR" id="P36247"/>
<dbReference type="GO" id="GO:0005737">
    <property type="term" value="C:cytoplasm"/>
    <property type="evidence" value="ECO:0007669"/>
    <property type="project" value="UniProtKB-ARBA"/>
</dbReference>
<dbReference type="GO" id="GO:1990904">
    <property type="term" value="C:ribonucleoprotein complex"/>
    <property type="evidence" value="ECO:0007669"/>
    <property type="project" value="UniProtKB-KW"/>
</dbReference>
<dbReference type="GO" id="GO:0005840">
    <property type="term" value="C:ribosome"/>
    <property type="evidence" value="ECO:0007669"/>
    <property type="project" value="UniProtKB-KW"/>
</dbReference>
<dbReference type="GO" id="GO:0003729">
    <property type="term" value="F:mRNA binding"/>
    <property type="evidence" value="ECO:0007669"/>
    <property type="project" value="TreeGrafter"/>
</dbReference>
<dbReference type="GO" id="GO:0003735">
    <property type="term" value="F:structural constituent of ribosome"/>
    <property type="evidence" value="ECO:0007669"/>
    <property type="project" value="InterPro"/>
</dbReference>
<dbReference type="GO" id="GO:0006412">
    <property type="term" value="P:translation"/>
    <property type="evidence" value="ECO:0007669"/>
    <property type="project" value="UniProtKB-UniRule"/>
</dbReference>
<dbReference type="CDD" id="cd00387">
    <property type="entry name" value="Ribosomal_L7_L12"/>
    <property type="match status" value="1"/>
</dbReference>
<dbReference type="FunFam" id="3.30.1390.10:FF:000001">
    <property type="entry name" value="50S ribosomal protein L7/L12"/>
    <property type="match status" value="1"/>
</dbReference>
<dbReference type="Gene3D" id="3.30.1390.10">
    <property type="match status" value="1"/>
</dbReference>
<dbReference type="Gene3D" id="1.20.5.710">
    <property type="entry name" value="Single helix bin"/>
    <property type="match status" value="1"/>
</dbReference>
<dbReference type="HAMAP" id="MF_00368">
    <property type="entry name" value="Ribosomal_bL12"/>
    <property type="match status" value="1"/>
</dbReference>
<dbReference type="InterPro" id="IPR000206">
    <property type="entry name" value="Ribosomal_bL12"/>
</dbReference>
<dbReference type="InterPro" id="IPR013823">
    <property type="entry name" value="Ribosomal_bL12_C"/>
</dbReference>
<dbReference type="InterPro" id="IPR014719">
    <property type="entry name" value="Ribosomal_bL12_C/ClpS-like"/>
</dbReference>
<dbReference type="InterPro" id="IPR008932">
    <property type="entry name" value="Ribosomal_bL12_oligo"/>
</dbReference>
<dbReference type="InterPro" id="IPR036235">
    <property type="entry name" value="Ribosomal_bL12_oligo_N_sf"/>
</dbReference>
<dbReference type="NCBIfam" id="TIGR00855">
    <property type="entry name" value="L12"/>
    <property type="match status" value="1"/>
</dbReference>
<dbReference type="PANTHER" id="PTHR45987">
    <property type="entry name" value="39S RIBOSOMAL PROTEIN L12"/>
    <property type="match status" value="1"/>
</dbReference>
<dbReference type="PANTHER" id="PTHR45987:SF4">
    <property type="entry name" value="LARGE RIBOSOMAL SUBUNIT PROTEIN BL12M"/>
    <property type="match status" value="1"/>
</dbReference>
<dbReference type="Pfam" id="PF00542">
    <property type="entry name" value="Ribosomal_L12"/>
    <property type="match status" value="1"/>
</dbReference>
<dbReference type="Pfam" id="PF16320">
    <property type="entry name" value="Ribosomal_L12_N"/>
    <property type="match status" value="1"/>
</dbReference>
<dbReference type="SUPFAM" id="SSF54736">
    <property type="entry name" value="ClpS-like"/>
    <property type="match status" value="1"/>
</dbReference>
<dbReference type="SUPFAM" id="SSF48300">
    <property type="entry name" value="Ribosomal protein L7/12, oligomerisation (N-terminal) domain"/>
    <property type="match status" value="1"/>
</dbReference>
<keyword id="KW-0687">Ribonucleoprotein</keyword>
<keyword id="KW-0689">Ribosomal protein</keyword>
<sequence>MSNIESIVEKLSSLTLIEAAELSKRLEKEWGVSASAPVSVVAPVAAEAGSAASEKTEFEVVLKGFDDPKKKIAVIKEVRAITDLGLKEAKELVESAPKSLKTGLSKDEANEMKKKLEDAGAT</sequence>
<proteinExistence type="inferred from homology"/>
<name>RL7_LIBAS</name>
<comment type="function">
    <text evidence="1">Forms part of the ribosomal stalk which helps the ribosome interact with GTP-bound translation factors. Is thus essential for accurate translation.</text>
</comment>
<comment type="subunit">
    <text evidence="1">Homodimer. Part of the ribosomal stalk of the 50S ribosomal subunit. Forms a multimeric L10(L12)X complex, where L10 forms an elongated spine to which 2 to 4 L12 dimers bind in a sequential fashion. Binds GTP-bound translation factors.</text>
</comment>
<comment type="similarity">
    <text evidence="1">Belongs to the bacterial ribosomal protein bL12 family.</text>
</comment>